<proteinExistence type="evidence at protein level"/>
<dbReference type="EMBL" id="AK055225">
    <property type="protein sequence ID" value="BAB70879.1"/>
    <property type="molecule type" value="mRNA"/>
</dbReference>
<dbReference type="EMBL" id="BC044615">
    <property type="protein sequence ID" value="AAH44615.1"/>
    <property type="status" value="ALT_INIT"/>
    <property type="molecule type" value="mRNA"/>
</dbReference>
<dbReference type="EMBL" id="BC092428">
    <property type="protein sequence ID" value="AAH92428.1"/>
    <property type="molecule type" value="mRNA"/>
</dbReference>
<dbReference type="CCDS" id="CCDS32991.1">
    <molecule id="Q96NL3-1"/>
</dbReference>
<dbReference type="RefSeq" id="NP_001007249.1">
    <molecule id="Q96NL3-1"/>
    <property type="nucleotide sequence ID" value="NM_001007248.3"/>
</dbReference>
<dbReference type="SMR" id="Q96NL3"/>
<dbReference type="BioGRID" id="127117">
    <property type="interactions" value="9"/>
</dbReference>
<dbReference type="FunCoup" id="Q96NL3">
    <property type="interactions" value="45"/>
</dbReference>
<dbReference type="IntAct" id="Q96NL3">
    <property type="interactions" value="8"/>
</dbReference>
<dbReference type="MINT" id="Q96NL3"/>
<dbReference type="STRING" id="9606.ENSP00000333802"/>
<dbReference type="iPTMnet" id="Q96NL3"/>
<dbReference type="PhosphoSitePlus" id="Q96NL3"/>
<dbReference type="BioMuta" id="ZNF599"/>
<dbReference type="DMDM" id="74762682"/>
<dbReference type="jPOST" id="Q96NL3"/>
<dbReference type="MassIVE" id="Q96NL3"/>
<dbReference type="PaxDb" id="9606-ENSP00000333802"/>
<dbReference type="PeptideAtlas" id="Q96NL3"/>
<dbReference type="ProteomicsDB" id="77530">
    <molecule id="Q96NL3-1"/>
</dbReference>
<dbReference type="Antibodypedia" id="847">
    <property type="antibodies" value="99 antibodies from 17 providers"/>
</dbReference>
<dbReference type="DNASU" id="148103"/>
<dbReference type="Ensembl" id="ENST00000329285.13">
    <molecule id="Q96NL3-1"/>
    <property type="protein sequence ID" value="ENSP00000333802.6"/>
    <property type="gene ID" value="ENSG00000153896.19"/>
</dbReference>
<dbReference type="Ensembl" id="ENST00000587354.6">
    <molecule id="Q96NL3-2"/>
    <property type="protein sequence ID" value="ENSP00000468446.1"/>
    <property type="gene ID" value="ENSG00000153896.19"/>
</dbReference>
<dbReference type="GeneID" id="148103"/>
<dbReference type="KEGG" id="hsa:148103"/>
<dbReference type="MANE-Select" id="ENST00000329285.13">
    <property type="protein sequence ID" value="ENSP00000333802.6"/>
    <property type="RefSeq nucleotide sequence ID" value="NM_001007248.3"/>
    <property type="RefSeq protein sequence ID" value="NP_001007249.1"/>
</dbReference>
<dbReference type="UCSC" id="uc010edn.2">
    <molecule id="Q96NL3-1"/>
    <property type="organism name" value="human"/>
</dbReference>
<dbReference type="AGR" id="HGNC:26408"/>
<dbReference type="CTD" id="148103"/>
<dbReference type="GeneCards" id="ZNF599"/>
<dbReference type="HGNC" id="HGNC:26408">
    <property type="gene designation" value="ZNF599"/>
</dbReference>
<dbReference type="HPA" id="ENSG00000153896">
    <property type="expression patterns" value="Low tissue specificity"/>
</dbReference>
<dbReference type="neXtProt" id="NX_Q96NL3"/>
<dbReference type="OpenTargets" id="ENSG00000153896"/>
<dbReference type="PharmGKB" id="PA134983786"/>
<dbReference type="VEuPathDB" id="HostDB:ENSG00000153896"/>
<dbReference type="eggNOG" id="KOG1721">
    <property type="taxonomic scope" value="Eukaryota"/>
</dbReference>
<dbReference type="GeneTree" id="ENSGT00940000159953"/>
<dbReference type="HOGENOM" id="CLU_002678_57_1_1"/>
<dbReference type="InParanoid" id="Q96NL3"/>
<dbReference type="OMA" id="QSTCAGE"/>
<dbReference type="OrthoDB" id="9548399at2759"/>
<dbReference type="PAN-GO" id="Q96NL3">
    <property type="GO annotations" value="3 GO annotations based on evolutionary models"/>
</dbReference>
<dbReference type="PhylomeDB" id="Q96NL3"/>
<dbReference type="TreeFam" id="TF341817"/>
<dbReference type="PathwayCommons" id="Q96NL3"/>
<dbReference type="Reactome" id="R-HSA-212436">
    <property type="pathway name" value="Generic Transcription Pathway"/>
</dbReference>
<dbReference type="SignaLink" id="Q96NL3"/>
<dbReference type="BioGRID-ORCS" id="148103">
    <property type="hits" value="14 hits in 1172 CRISPR screens"/>
</dbReference>
<dbReference type="GenomeRNAi" id="148103"/>
<dbReference type="Pharos" id="Q96NL3">
    <property type="development level" value="Tdark"/>
</dbReference>
<dbReference type="PRO" id="PR:Q96NL3"/>
<dbReference type="Proteomes" id="UP000005640">
    <property type="component" value="Chromosome 19"/>
</dbReference>
<dbReference type="RNAct" id="Q96NL3">
    <property type="molecule type" value="protein"/>
</dbReference>
<dbReference type="Bgee" id="ENSG00000153896">
    <property type="expression patterns" value="Expressed in secondary oocyte and 123 other cell types or tissues"/>
</dbReference>
<dbReference type="ExpressionAtlas" id="Q96NL3">
    <property type="expression patterns" value="baseline and differential"/>
</dbReference>
<dbReference type="GO" id="GO:0005634">
    <property type="term" value="C:nucleus"/>
    <property type="evidence" value="ECO:0000318"/>
    <property type="project" value="GO_Central"/>
</dbReference>
<dbReference type="GO" id="GO:0000981">
    <property type="term" value="F:DNA-binding transcription factor activity, RNA polymerase II-specific"/>
    <property type="evidence" value="ECO:0000318"/>
    <property type="project" value="GO_Central"/>
</dbReference>
<dbReference type="GO" id="GO:0000977">
    <property type="term" value="F:RNA polymerase II transcription regulatory region sequence-specific DNA binding"/>
    <property type="evidence" value="ECO:0000318"/>
    <property type="project" value="GO_Central"/>
</dbReference>
<dbReference type="GO" id="GO:0008270">
    <property type="term" value="F:zinc ion binding"/>
    <property type="evidence" value="ECO:0007669"/>
    <property type="project" value="UniProtKB-KW"/>
</dbReference>
<dbReference type="GO" id="GO:0006357">
    <property type="term" value="P:regulation of transcription by RNA polymerase II"/>
    <property type="evidence" value="ECO:0000318"/>
    <property type="project" value="GO_Central"/>
</dbReference>
<dbReference type="CDD" id="cd07765">
    <property type="entry name" value="KRAB_A-box"/>
    <property type="match status" value="1"/>
</dbReference>
<dbReference type="FunFam" id="3.30.160.60:FF:004682">
    <property type="match status" value="1"/>
</dbReference>
<dbReference type="FunFam" id="3.30.160.60:FF:000040">
    <property type="entry name" value="RB associated KRAB zinc finger"/>
    <property type="match status" value="1"/>
</dbReference>
<dbReference type="FunFam" id="3.30.160.60:FF:000352">
    <property type="entry name" value="zinc finger protein 3 homolog"/>
    <property type="match status" value="1"/>
</dbReference>
<dbReference type="FunFam" id="3.30.160.60:FF:002343">
    <property type="entry name" value="Zinc finger protein 33A"/>
    <property type="match status" value="1"/>
</dbReference>
<dbReference type="FunFam" id="3.30.160.60:FF:001498">
    <property type="entry name" value="Zinc finger protein 404"/>
    <property type="match status" value="1"/>
</dbReference>
<dbReference type="FunFam" id="3.30.160.60:FF:002090">
    <property type="entry name" value="Zinc finger protein 473"/>
    <property type="match status" value="1"/>
</dbReference>
<dbReference type="FunFam" id="3.30.160.60:FF:002254">
    <property type="entry name" value="Zinc finger protein 540"/>
    <property type="match status" value="2"/>
</dbReference>
<dbReference type="FunFam" id="3.30.160.60:FF:001187">
    <property type="entry name" value="Zinc finger protein 599"/>
    <property type="match status" value="1"/>
</dbReference>
<dbReference type="FunFam" id="3.30.160.60:FF:002017">
    <property type="entry name" value="Zinc finger protein 599"/>
    <property type="match status" value="1"/>
</dbReference>
<dbReference type="FunFam" id="3.30.160.60:FF:000877">
    <property type="entry name" value="zinc finger protein 599"/>
    <property type="match status" value="3"/>
</dbReference>
<dbReference type="FunFam" id="3.30.160.60:FF:000099">
    <property type="entry name" value="Zinc finger protein 79"/>
    <property type="match status" value="1"/>
</dbReference>
<dbReference type="Gene3D" id="6.10.140.140">
    <property type="match status" value="1"/>
</dbReference>
<dbReference type="Gene3D" id="3.30.160.60">
    <property type="entry name" value="Classic Zinc Finger"/>
    <property type="match status" value="14"/>
</dbReference>
<dbReference type="InterPro" id="IPR001909">
    <property type="entry name" value="KRAB"/>
</dbReference>
<dbReference type="InterPro" id="IPR036051">
    <property type="entry name" value="KRAB_dom_sf"/>
</dbReference>
<dbReference type="InterPro" id="IPR036236">
    <property type="entry name" value="Znf_C2H2_sf"/>
</dbReference>
<dbReference type="InterPro" id="IPR013087">
    <property type="entry name" value="Znf_C2H2_type"/>
</dbReference>
<dbReference type="PANTHER" id="PTHR23226">
    <property type="entry name" value="ZINC FINGER AND SCAN DOMAIN-CONTAINING"/>
    <property type="match status" value="1"/>
</dbReference>
<dbReference type="PANTHER" id="PTHR23226:SF425">
    <property type="entry name" value="ZINC FINGER PROTEIN 621"/>
    <property type="match status" value="1"/>
</dbReference>
<dbReference type="Pfam" id="PF01352">
    <property type="entry name" value="KRAB"/>
    <property type="match status" value="1"/>
</dbReference>
<dbReference type="Pfam" id="PF00096">
    <property type="entry name" value="zf-C2H2"/>
    <property type="match status" value="14"/>
</dbReference>
<dbReference type="SMART" id="SM00349">
    <property type="entry name" value="KRAB"/>
    <property type="match status" value="1"/>
</dbReference>
<dbReference type="SMART" id="SM00355">
    <property type="entry name" value="ZnF_C2H2"/>
    <property type="match status" value="14"/>
</dbReference>
<dbReference type="SUPFAM" id="SSF57667">
    <property type="entry name" value="beta-beta-alpha zinc fingers"/>
    <property type="match status" value="8"/>
</dbReference>
<dbReference type="SUPFAM" id="SSF109640">
    <property type="entry name" value="KRAB domain (Kruppel-associated box)"/>
    <property type="match status" value="1"/>
</dbReference>
<dbReference type="PROSITE" id="PS50805">
    <property type="entry name" value="KRAB"/>
    <property type="match status" value="1"/>
</dbReference>
<dbReference type="PROSITE" id="PS00028">
    <property type="entry name" value="ZINC_FINGER_C2H2_1"/>
    <property type="match status" value="14"/>
</dbReference>
<dbReference type="PROSITE" id="PS50157">
    <property type="entry name" value="ZINC_FINGER_C2H2_2"/>
    <property type="match status" value="14"/>
</dbReference>
<gene>
    <name type="primary">ZNF599</name>
</gene>
<feature type="chain" id="PRO_0000234592" description="Zinc finger protein 599">
    <location>
        <begin position="1"/>
        <end position="588"/>
    </location>
</feature>
<feature type="domain" description="KRAB" evidence="2">
    <location>
        <begin position="9"/>
        <end position="80"/>
    </location>
</feature>
<feature type="zinc finger region" description="C2H2-type 1" evidence="1">
    <location>
        <begin position="199"/>
        <end position="221"/>
    </location>
</feature>
<feature type="zinc finger region" description="C2H2-type 2" evidence="1">
    <location>
        <begin position="227"/>
        <end position="249"/>
    </location>
</feature>
<feature type="zinc finger region" description="C2H2-type 3" evidence="1">
    <location>
        <begin position="255"/>
        <end position="277"/>
    </location>
</feature>
<feature type="zinc finger region" description="C2H2-type 4" evidence="1">
    <location>
        <begin position="283"/>
        <end position="305"/>
    </location>
</feature>
<feature type="zinc finger region" description="C2H2-type 5" evidence="1">
    <location>
        <begin position="311"/>
        <end position="333"/>
    </location>
</feature>
<feature type="zinc finger region" description="C2H2-type 6" evidence="1">
    <location>
        <begin position="339"/>
        <end position="361"/>
    </location>
</feature>
<feature type="zinc finger region" description="C2H2-type 7" evidence="1">
    <location>
        <begin position="367"/>
        <end position="389"/>
    </location>
</feature>
<feature type="zinc finger region" description="C2H2-type 8" evidence="1">
    <location>
        <begin position="395"/>
        <end position="417"/>
    </location>
</feature>
<feature type="zinc finger region" description="C2H2-type 9" evidence="1">
    <location>
        <begin position="423"/>
        <end position="445"/>
    </location>
</feature>
<feature type="zinc finger region" description="C2H2-type 10" evidence="1">
    <location>
        <begin position="451"/>
        <end position="473"/>
    </location>
</feature>
<feature type="zinc finger region" description="C2H2-type 11" evidence="1">
    <location>
        <begin position="479"/>
        <end position="501"/>
    </location>
</feature>
<feature type="zinc finger region" description="C2H2-type 12" evidence="1">
    <location>
        <begin position="507"/>
        <end position="529"/>
    </location>
</feature>
<feature type="zinc finger region" description="C2H2-type 13" evidence="1">
    <location>
        <begin position="535"/>
        <end position="557"/>
    </location>
</feature>
<feature type="zinc finger region" description="C2H2-type 14" evidence="1">
    <location>
        <begin position="563"/>
        <end position="585"/>
    </location>
</feature>
<feature type="splice variant" id="VSP_018385" description="In isoform 2." evidence="4">
    <original>GEKAKPKITEPTASQ</original>
    <variation>ASFSLLWKSYHPGHG</variation>
    <location>
        <begin position="81"/>
        <end position="95"/>
    </location>
</feature>
<feature type="splice variant" id="VSP_018386" description="In isoform 2." evidence="4">
    <location>
        <begin position="96"/>
        <end position="588"/>
    </location>
</feature>
<feature type="sequence variant" id="VAR_065087" description="De novo variant found in a patient with intellectual disability; dbSNP:rs146342141." evidence="3">
    <original>L</original>
    <variation>F</variation>
    <location>
        <position position="178"/>
    </location>
</feature>
<feature type="sequence conflict" description="In Ref. 2; AAH44615." evidence="5" ref="2">
    <original>A</original>
    <variation>T</variation>
    <location>
        <position position="459"/>
    </location>
</feature>
<keyword id="KW-0025">Alternative splicing</keyword>
<keyword id="KW-0238">DNA-binding</keyword>
<keyword id="KW-0479">Metal-binding</keyword>
<keyword id="KW-0539">Nucleus</keyword>
<keyword id="KW-1267">Proteomics identification</keyword>
<keyword id="KW-1185">Reference proteome</keyword>
<keyword id="KW-0677">Repeat</keyword>
<keyword id="KW-0804">Transcription</keyword>
<keyword id="KW-0805">Transcription regulation</keyword>
<keyword id="KW-0862">Zinc</keyword>
<keyword id="KW-0863">Zinc-finger</keyword>
<accession>Q96NL3</accession>
<accession>Q569K0</accession>
<accession>Q5PRG1</accession>
<reference key="1">
    <citation type="journal article" date="2004" name="Nat. Genet.">
        <title>Complete sequencing and characterization of 21,243 full-length human cDNAs.</title>
        <authorList>
            <person name="Ota T."/>
            <person name="Suzuki Y."/>
            <person name="Nishikawa T."/>
            <person name="Otsuki T."/>
            <person name="Sugiyama T."/>
            <person name="Irie R."/>
            <person name="Wakamatsu A."/>
            <person name="Hayashi K."/>
            <person name="Sato H."/>
            <person name="Nagai K."/>
            <person name="Kimura K."/>
            <person name="Makita H."/>
            <person name="Sekine M."/>
            <person name="Obayashi M."/>
            <person name="Nishi T."/>
            <person name="Shibahara T."/>
            <person name="Tanaka T."/>
            <person name="Ishii S."/>
            <person name="Yamamoto J."/>
            <person name="Saito K."/>
            <person name="Kawai Y."/>
            <person name="Isono Y."/>
            <person name="Nakamura Y."/>
            <person name="Nagahari K."/>
            <person name="Murakami K."/>
            <person name="Yasuda T."/>
            <person name="Iwayanagi T."/>
            <person name="Wagatsuma M."/>
            <person name="Shiratori A."/>
            <person name="Sudo H."/>
            <person name="Hosoiri T."/>
            <person name="Kaku Y."/>
            <person name="Kodaira H."/>
            <person name="Kondo H."/>
            <person name="Sugawara M."/>
            <person name="Takahashi M."/>
            <person name="Kanda K."/>
            <person name="Yokoi T."/>
            <person name="Furuya T."/>
            <person name="Kikkawa E."/>
            <person name="Omura Y."/>
            <person name="Abe K."/>
            <person name="Kamihara K."/>
            <person name="Katsuta N."/>
            <person name="Sato K."/>
            <person name="Tanikawa M."/>
            <person name="Yamazaki M."/>
            <person name="Ninomiya K."/>
            <person name="Ishibashi T."/>
            <person name="Yamashita H."/>
            <person name="Murakawa K."/>
            <person name="Fujimori K."/>
            <person name="Tanai H."/>
            <person name="Kimata M."/>
            <person name="Watanabe M."/>
            <person name="Hiraoka S."/>
            <person name="Chiba Y."/>
            <person name="Ishida S."/>
            <person name="Ono Y."/>
            <person name="Takiguchi S."/>
            <person name="Watanabe S."/>
            <person name="Yosida M."/>
            <person name="Hotuta T."/>
            <person name="Kusano J."/>
            <person name="Kanehori K."/>
            <person name="Takahashi-Fujii A."/>
            <person name="Hara H."/>
            <person name="Tanase T.-O."/>
            <person name="Nomura Y."/>
            <person name="Togiya S."/>
            <person name="Komai F."/>
            <person name="Hara R."/>
            <person name="Takeuchi K."/>
            <person name="Arita M."/>
            <person name="Imose N."/>
            <person name="Musashino K."/>
            <person name="Yuuki H."/>
            <person name="Oshima A."/>
            <person name="Sasaki N."/>
            <person name="Aotsuka S."/>
            <person name="Yoshikawa Y."/>
            <person name="Matsunawa H."/>
            <person name="Ichihara T."/>
            <person name="Shiohata N."/>
            <person name="Sano S."/>
            <person name="Moriya S."/>
            <person name="Momiyama H."/>
            <person name="Satoh N."/>
            <person name="Takami S."/>
            <person name="Terashima Y."/>
            <person name="Suzuki O."/>
            <person name="Nakagawa S."/>
            <person name="Senoh A."/>
            <person name="Mizoguchi H."/>
            <person name="Goto Y."/>
            <person name="Shimizu F."/>
            <person name="Wakebe H."/>
            <person name="Hishigaki H."/>
            <person name="Watanabe T."/>
            <person name="Sugiyama A."/>
            <person name="Takemoto M."/>
            <person name="Kawakami B."/>
            <person name="Yamazaki M."/>
            <person name="Watanabe K."/>
            <person name="Kumagai A."/>
            <person name="Itakura S."/>
            <person name="Fukuzumi Y."/>
            <person name="Fujimori Y."/>
            <person name="Komiyama M."/>
            <person name="Tashiro H."/>
            <person name="Tanigami A."/>
            <person name="Fujiwara T."/>
            <person name="Ono T."/>
            <person name="Yamada K."/>
            <person name="Fujii Y."/>
            <person name="Ozaki K."/>
            <person name="Hirao M."/>
            <person name="Ohmori Y."/>
            <person name="Kawabata A."/>
            <person name="Hikiji T."/>
            <person name="Kobatake N."/>
            <person name="Inagaki H."/>
            <person name="Ikema Y."/>
            <person name="Okamoto S."/>
            <person name="Okitani R."/>
            <person name="Kawakami T."/>
            <person name="Noguchi S."/>
            <person name="Itoh T."/>
            <person name="Shigeta K."/>
            <person name="Senba T."/>
            <person name="Matsumura K."/>
            <person name="Nakajima Y."/>
            <person name="Mizuno T."/>
            <person name="Morinaga M."/>
            <person name="Sasaki M."/>
            <person name="Togashi T."/>
            <person name="Oyama M."/>
            <person name="Hata H."/>
            <person name="Watanabe M."/>
            <person name="Komatsu T."/>
            <person name="Mizushima-Sugano J."/>
            <person name="Satoh T."/>
            <person name="Shirai Y."/>
            <person name="Takahashi Y."/>
            <person name="Nakagawa K."/>
            <person name="Okumura K."/>
            <person name="Nagase T."/>
            <person name="Nomura N."/>
            <person name="Kikuchi H."/>
            <person name="Masuho Y."/>
            <person name="Yamashita R."/>
            <person name="Nakai K."/>
            <person name="Yada T."/>
            <person name="Nakamura Y."/>
            <person name="Ohara O."/>
            <person name="Isogai T."/>
            <person name="Sugano S."/>
        </authorList>
    </citation>
    <scope>NUCLEOTIDE SEQUENCE [LARGE SCALE MRNA] (ISOFORM 1)</scope>
    <source>
        <tissue>Brain</tissue>
    </source>
</reference>
<reference key="2">
    <citation type="journal article" date="2004" name="Genome Res.">
        <title>The status, quality, and expansion of the NIH full-length cDNA project: the Mammalian Gene Collection (MGC).</title>
        <authorList>
            <consortium name="The MGC Project Team"/>
        </authorList>
    </citation>
    <scope>NUCLEOTIDE SEQUENCE [LARGE SCALE MRNA] (ISOFORM 2)</scope>
    <scope>NUCLEOTIDE SEQUENCE [LARGE SCALE MRNA] OF 33-588 (ISOFORM 1)</scope>
    <source>
        <tissue>Testis</tissue>
    </source>
</reference>
<reference key="3">
    <citation type="journal article" date="2010" name="Nat. Genet.">
        <title>A de novo paradigm for mental retardation.</title>
        <authorList>
            <person name="Vissers L.E."/>
            <person name="de Ligt J."/>
            <person name="Gilissen C."/>
            <person name="Janssen I."/>
            <person name="Steehouwer M."/>
            <person name="de Vries P."/>
            <person name="van Lier B."/>
            <person name="Arts P."/>
            <person name="Wieskamp N."/>
            <person name="del Rosario M."/>
            <person name="van Bon B.W."/>
            <person name="Hoischen A."/>
            <person name="de Vries B.B."/>
            <person name="Brunner H.G."/>
            <person name="Veltman J.A."/>
        </authorList>
    </citation>
    <scope>VARIANT PHE-178</scope>
</reference>
<sequence>MAAPALALVSFEDVVVTFTGEEWGHLDLAQRTLYQEVMLETCRLLVSLGHPVPKPELIYLLEHGQELWTVKRGLSQSTCAGEKAKPKITEPTASQLAFSEESSFQELLAQRSSRDSRLGQARDEEKLIKIQEGNLRPGTNPHKEICPEKLSYKHDDLEPDDSLGLRVLQERVTPQDALHECDSQGPGKDPMTDARNNPYTCTECGKGFSKKWALVRHQQIHAGVKPYECNECGKACRYMADVIRHMRLHTGEKPYKCIECGKAFKRRFHLTEHQRIHTGDKPYECKECGKAFTHRSSFIQHNMTHTREKPFLCKECGKAFYYSSSFAQHMRIHTGKKLYECGECGKAFTHRSTFIQHNVTHTGEKPFLCKECGKTFCLNSSFTQHMRIHTGEKPYECGECGKAFTHRSTFIRHKRTHTGEKPFECKECGKAFCDSSSLIQHMRIHTGEKPYECSECGKAFTHHSVFIRHNRTHSGQKPLECKECAKAFYYSSSFTRHMRIHTGEKPYVCRECGKAFTQPANFVRHNRIHTGEKPFECKECEKAFCDNFALTQHMRTHTGEKPFECNECGKTFSHSSSFTHHRKIHTRV</sequence>
<protein>
    <recommendedName>
        <fullName>Zinc finger protein 599</fullName>
    </recommendedName>
</protein>
<organism>
    <name type="scientific">Homo sapiens</name>
    <name type="common">Human</name>
    <dbReference type="NCBI Taxonomy" id="9606"/>
    <lineage>
        <taxon>Eukaryota</taxon>
        <taxon>Metazoa</taxon>
        <taxon>Chordata</taxon>
        <taxon>Craniata</taxon>
        <taxon>Vertebrata</taxon>
        <taxon>Euteleostomi</taxon>
        <taxon>Mammalia</taxon>
        <taxon>Eutheria</taxon>
        <taxon>Euarchontoglires</taxon>
        <taxon>Primates</taxon>
        <taxon>Haplorrhini</taxon>
        <taxon>Catarrhini</taxon>
        <taxon>Hominidae</taxon>
        <taxon>Homo</taxon>
    </lineage>
</organism>
<evidence type="ECO:0000255" key="1">
    <source>
        <dbReference type="PROSITE-ProRule" id="PRU00042"/>
    </source>
</evidence>
<evidence type="ECO:0000255" key="2">
    <source>
        <dbReference type="PROSITE-ProRule" id="PRU00119"/>
    </source>
</evidence>
<evidence type="ECO:0000269" key="3">
    <source>
    </source>
</evidence>
<evidence type="ECO:0000303" key="4">
    <source>
    </source>
</evidence>
<evidence type="ECO:0000305" key="5"/>
<name>ZN599_HUMAN</name>
<comment type="function">
    <text>May be involved in transcriptional regulation.</text>
</comment>
<comment type="interaction">
    <interactant intactId="EBI-8653994">
        <id>Q96NL3</id>
    </interactant>
    <interactant intactId="EBI-739624">
        <id>Q8NHQ1</id>
        <label>CEP70</label>
    </interactant>
    <organismsDiffer>false</organismsDiffer>
    <experiments>3</experiments>
</comment>
<comment type="interaction">
    <interactant intactId="EBI-8653994">
        <id>Q96NL3</id>
    </interactant>
    <interactant intactId="EBI-5916454">
        <id>A6NEM1</id>
        <label>GOLGA6L9</label>
    </interactant>
    <organismsDiffer>false</organismsDiffer>
    <experiments>3</experiments>
</comment>
<comment type="interaction">
    <interactant intactId="EBI-8653994">
        <id>Q96NL3</id>
    </interactant>
    <interactant intactId="EBI-10172052">
        <id>P60411</id>
        <label>KRTAP10-9</label>
    </interactant>
    <organismsDiffer>false</organismsDiffer>
    <experiments>3</experiments>
</comment>
<comment type="interaction">
    <interactant intactId="EBI-8653994">
        <id>Q96NL3</id>
    </interactant>
    <interactant intactId="EBI-742948">
        <id>Q5JR59</id>
        <label>MTUS2</label>
    </interactant>
    <organismsDiffer>false</organismsDiffer>
    <experiments>3</experiments>
</comment>
<comment type="interaction">
    <interactant intactId="EBI-8653994">
        <id>Q96NL3</id>
    </interactant>
    <interactant intactId="EBI-928842">
        <id>Q9GZM8</id>
        <label>NDEL1</label>
    </interactant>
    <organismsDiffer>false</organismsDiffer>
    <experiments>6</experiments>
</comment>
<comment type="interaction">
    <interactant intactId="EBI-8653994">
        <id>Q96NL3</id>
    </interactant>
    <interactant intactId="EBI-744794">
        <id>Q9BZW7</id>
        <label>TSGA10</label>
    </interactant>
    <organismsDiffer>false</organismsDiffer>
    <experiments>3</experiments>
</comment>
<comment type="interaction">
    <interactant intactId="EBI-8653994">
        <id>Q96NL3</id>
    </interactant>
    <interactant intactId="EBI-527853">
        <id>Q9UGI0</id>
        <label>ZRANB1</label>
    </interactant>
    <organismsDiffer>false</organismsDiffer>
    <experiments>3</experiments>
</comment>
<comment type="subcellular location">
    <subcellularLocation>
        <location evidence="5">Nucleus</location>
    </subcellularLocation>
</comment>
<comment type="alternative products">
    <event type="alternative splicing"/>
    <isoform>
        <id>Q96NL3-1</id>
        <name>1</name>
        <sequence type="displayed"/>
    </isoform>
    <isoform>
        <id>Q96NL3-2</id>
        <name>2</name>
        <sequence type="described" ref="VSP_018385 VSP_018386"/>
    </isoform>
</comment>
<comment type="similarity">
    <text evidence="5">Belongs to the krueppel C2H2-type zinc-finger protein family.</text>
</comment>
<comment type="sequence caution" evidence="5">
    <conflict type="erroneous initiation">
        <sequence resource="EMBL-CDS" id="AAH44615"/>
    </conflict>
</comment>